<organism>
    <name type="scientific">Shewanella woodyi (strain ATCC 51908 / MS32)</name>
    <dbReference type="NCBI Taxonomy" id="392500"/>
    <lineage>
        <taxon>Bacteria</taxon>
        <taxon>Pseudomonadati</taxon>
        <taxon>Pseudomonadota</taxon>
        <taxon>Gammaproteobacteria</taxon>
        <taxon>Alteromonadales</taxon>
        <taxon>Shewanellaceae</taxon>
        <taxon>Shewanella</taxon>
    </lineage>
</organism>
<proteinExistence type="inferred from homology"/>
<protein>
    <recommendedName>
        <fullName evidence="1">CinA-like protein</fullName>
    </recommendedName>
</protein>
<evidence type="ECO:0000255" key="1">
    <source>
        <dbReference type="HAMAP-Rule" id="MF_00226"/>
    </source>
</evidence>
<reference key="1">
    <citation type="submission" date="2008-02" db="EMBL/GenBank/DDBJ databases">
        <title>Complete sequence of Shewanella woodyi ATCC 51908.</title>
        <authorList>
            <consortium name="US DOE Joint Genome Institute"/>
            <person name="Copeland A."/>
            <person name="Lucas S."/>
            <person name="Lapidus A."/>
            <person name="Glavina del Rio T."/>
            <person name="Dalin E."/>
            <person name="Tice H."/>
            <person name="Bruce D."/>
            <person name="Goodwin L."/>
            <person name="Pitluck S."/>
            <person name="Sims D."/>
            <person name="Brettin T."/>
            <person name="Detter J.C."/>
            <person name="Han C."/>
            <person name="Kuske C.R."/>
            <person name="Schmutz J."/>
            <person name="Larimer F."/>
            <person name="Land M."/>
            <person name="Hauser L."/>
            <person name="Kyrpides N."/>
            <person name="Lykidis A."/>
            <person name="Zhao J.-S."/>
            <person name="Richardson P."/>
        </authorList>
    </citation>
    <scope>NUCLEOTIDE SEQUENCE [LARGE SCALE GENOMIC DNA]</scope>
    <source>
        <strain>ATCC 51908 / MS32</strain>
    </source>
</reference>
<sequence length="424" mass="45718">MKLEMICTGEEVLAGQIVDTNAAWFANTLIERGVECQRRITVGDRLEDLVAVFKERSTEADVIMVNGGLGPTSDDLSTEAMALALGVPLVENKEWRSKLEAWFAKNARVMAESNLKQALLPQGAIMIDNPVGTACGFAIKLNQAWLFFTPGVPFEFKRMVKEQFIPFIEEHFPLSEPVSVKKLLTLGHGESALADKLEVIPLPKGVTLGYRSYMPYIEIKLFARGQLAIDSLATIETEVKKILGHSVVAEDITTLDQEIHNSLVNSGFSLSVAESCTGGLIASGLVAFAGSSAYLHQGLVTYSNEAKVKVLGVNPQTLDDYGAVSIATVEEMAKGARGILDSDYALATSGIAGPDGGSDEKPVGTVAIALATKYGVYSQMLKLPSRSRALVRSLGTAIAYDMLRRELLGEAVIVDYSSFSRFSK</sequence>
<comment type="similarity">
    <text evidence="1">Belongs to the CinA family.</text>
</comment>
<feature type="chain" id="PRO_1000100333" description="CinA-like protein">
    <location>
        <begin position="1"/>
        <end position="424"/>
    </location>
</feature>
<gene>
    <name type="ordered locus">Swoo_0325</name>
</gene>
<name>CINAL_SHEWM</name>
<dbReference type="EMBL" id="CP000961">
    <property type="protein sequence ID" value="ACA84626.1"/>
    <property type="molecule type" value="Genomic_DNA"/>
</dbReference>
<dbReference type="RefSeq" id="WP_012322975.1">
    <property type="nucleotide sequence ID" value="NC_010506.1"/>
</dbReference>
<dbReference type="SMR" id="B1KNC9"/>
<dbReference type="STRING" id="392500.Swoo_0325"/>
<dbReference type="KEGG" id="swd:Swoo_0325"/>
<dbReference type="eggNOG" id="COG1058">
    <property type="taxonomic scope" value="Bacteria"/>
</dbReference>
<dbReference type="eggNOG" id="COG1546">
    <property type="taxonomic scope" value="Bacteria"/>
</dbReference>
<dbReference type="HOGENOM" id="CLU_030805_9_3_6"/>
<dbReference type="Proteomes" id="UP000002168">
    <property type="component" value="Chromosome"/>
</dbReference>
<dbReference type="CDD" id="cd00885">
    <property type="entry name" value="cinA"/>
    <property type="match status" value="1"/>
</dbReference>
<dbReference type="Gene3D" id="3.90.950.20">
    <property type="entry name" value="CinA-like"/>
    <property type="match status" value="1"/>
</dbReference>
<dbReference type="Gene3D" id="3.40.980.10">
    <property type="entry name" value="MoaB/Mog-like domain"/>
    <property type="match status" value="1"/>
</dbReference>
<dbReference type="HAMAP" id="MF_00226_B">
    <property type="entry name" value="CinA_B"/>
    <property type="match status" value="1"/>
</dbReference>
<dbReference type="InterPro" id="IPR050101">
    <property type="entry name" value="CinA"/>
</dbReference>
<dbReference type="InterPro" id="IPR036653">
    <property type="entry name" value="CinA-like_C"/>
</dbReference>
<dbReference type="InterPro" id="IPR008136">
    <property type="entry name" value="CinA_C"/>
</dbReference>
<dbReference type="InterPro" id="IPR008135">
    <property type="entry name" value="Competence-induced_CinA"/>
</dbReference>
<dbReference type="InterPro" id="IPR036425">
    <property type="entry name" value="MoaB/Mog-like_dom_sf"/>
</dbReference>
<dbReference type="InterPro" id="IPR001453">
    <property type="entry name" value="MoaB/Mog_dom"/>
</dbReference>
<dbReference type="NCBIfam" id="TIGR00200">
    <property type="entry name" value="cinA_nterm"/>
    <property type="match status" value="1"/>
</dbReference>
<dbReference type="NCBIfam" id="TIGR00177">
    <property type="entry name" value="molyb_syn"/>
    <property type="match status" value="1"/>
</dbReference>
<dbReference type="NCBIfam" id="TIGR00199">
    <property type="entry name" value="PncC_domain"/>
    <property type="match status" value="1"/>
</dbReference>
<dbReference type="PANTHER" id="PTHR13939">
    <property type="entry name" value="NICOTINAMIDE-NUCLEOTIDE AMIDOHYDROLASE PNCC"/>
    <property type="match status" value="1"/>
</dbReference>
<dbReference type="PANTHER" id="PTHR13939:SF0">
    <property type="entry name" value="NMN AMIDOHYDROLASE-LIKE PROTEIN YFAY"/>
    <property type="match status" value="1"/>
</dbReference>
<dbReference type="Pfam" id="PF02464">
    <property type="entry name" value="CinA"/>
    <property type="match status" value="1"/>
</dbReference>
<dbReference type="Pfam" id="PF00994">
    <property type="entry name" value="MoCF_biosynth"/>
    <property type="match status" value="1"/>
</dbReference>
<dbReference type="PIRSF" id="PIRSF006728">
    <property type="entry name" value="CinA"/>
    <property type="match status" value="1"/>
</dbReference>
<dbReference type="SMART" id="SM00852">
    <property type="entry name" value="MoCF_biosynth"/>
    <property type="match status" value="1"/>
</dbReference>
<dbReference type="SUPFAM" id="SSF142433">
    <property type="entry name" value="CinA-like"/>
    <property type="match status" value="1"/>
</dbReference>
<dbReference type="SUPFAM" id="SSF53218">
    <property type="entry name" value="Molybdenum cofactor biosynthesis proteins"/>
    <property type="match status" value="1"/>
</dbReference>
<accession>B1KNC9</accession>
<keyword id="KW-1185">Reference proteome</keyword>